<dbReference type="EMBL" id="CR954247">
    <property type="protein sequence ID" value="CAI89545.1"/>
    <property type="molecule type" value="Genomic_DNA"/>
</dbReference>
<dbReference type="SMR" id="Q3ICF9"/>
<dbReference type="STRING" id="326442.PSHAb0508"/>
<dbReference type="KEGG" id="pha:PSHAb0508"/>
<dbReference type="PATRIC" id="fig|326442.8.peg.3416"/>
<dbReference type="eggNOG" id="COG3100">
    <property type="taxonomic scope" value="Bacteria"/>
</dbReference>
<dbReference type="HOGENOM" id="CLU_155118_1_0_6"/>
<dbReference type="BioCyc" id="PHAL326442:PSHA_RS17280-MONOMER"/>
<dbReference type="Proteomes" id="UP000006843">
    <property type="component" value="Chromosome II"/>
</dbReference>
<dbReference type="Gene3D" id="3.10.510.20">
    <property type="entry name" value="YcgL domain"/>
    <property type="match status" value="1"/>
</dbReference>
<dbReference type="HAMAP" id="MF_01866">
    <property type="entry name" value="UPF0745"/>
    <property type="match status" value="1"/>
</dbReference>
<dbReference type="InterPro" id="IPR038068">
    <property type="entry name" value="YcgL-like_sf"/>
</dbReference>
<dbReference type="InterPro" id="IPR027354">
    <property type="entry name" value="YcgL_dom"/>
</dbReference>
<dbReference type="PANTHER" id="PTHR38109">
    <property type="entry name" value="PROTEIN YCGL"/>
    <property type="match status" value="1"/>
</dbReference>
<dbReference type="PANTHER" id="PTHR38109:SF1">
    <property type="entry name" value="PROTEIN YCGL"/>
    <property type="match status" value="1"/>
</dbReference>
<dbReference type="Pfam" id="PF05166">
    <property type="entry name" value="YcgL"/>
    <property type="match status" value="1"/>
</dbReference>
<dbReference type="SUPFAM" id="SSF160191">
    <property type="entry name" value="YcgL-like"/>
    <property type="match status" value="1"/>
</dbReference>
<dbReference type="PROSITE" id="PS51648">
    <property type="entry name" value="YCGL"/>
    <property type="match status" value="1"/>
</dbReference>
<evidence type="ECO:0000255" key="1">
    <source>
        <dbReference type="HAMAP-Rule" id="MF_01866"/>
    </source>
</evidence>
<organism>
    <name type="scientific">Pseudoalteromonas translucida (strain TAC 125)</name>
    <dbReference type="NCBI Taxonomy" id="326442"/>
    <lineage>
        <taxon>Bacteria</taxon>
        <taxon>Pseudomonadati</taxon>
        <taxon>Pseudomonadota</taxon>
        <taxon>Gammaproteobacteria</taxon>
        <taxon>Alteromonadales</taxon>
        <taxon>Pseudoalteromonadaceae</taxon>
        <taxon>Pseudoalteromonas</taxon>
    </lineage>
</organism>
<proteinExistence type="inferred from homology"/>
<protein>
    <recommendedName>
        <fullName evidence="1">YcgL domain-containing protein PSHAb0508</fullName>
    </recommendedName>
</protein>
<name>Y4008_PSET1</name>
<keyword id="KW-1185">Reference proteome</keyword>
<feature type="chain" id="PRO_0000375326" description="YcgL domain-containing protein PSHAb0508">
    <location>
        <begin position="1"/>
        <end position="93"/>
    </location>
</feature>
<feature type="domain" description="YcgL" evidence="1">
    <location>
        <begin position="1"/>
        <end position="85"/>
    </location>
</feature>
<sequence length="93" mass="10525">MLTAVYKSKKKADSFLFVEKRDDFTKVPEPLMAMFGQPKYVMLINLAKRAMLGTADLETVKAALTEKGYYLQIPPPQENLLSQLRKENGADND</sequence>
<gene>
    <name type="ordered locus">PSHAb0508</name>
</gene>
<reference key="1">
    <citation type="journal article" date="2005" name="Genome Res.">
        <title>Coping with cold: the genome of the versatile marine Antarctica bacterium Pseudoalteromonas haloplanktis TAC125.</title>
        <authorList>
            <person name="Medigue C."/>
            <person name="Krin E."/>
            <person name="Pascal G."/>
            <person name="Barbe V."/>
            <person name="Bernsel A."/>
            <person name="Bertin P.N."/>
            <person name="Cheung F."/>
            <person name="Cruveiller S."/>
            <person name="D'Amico S."/>
            <person name="Duilio A."/>
            <person name="Fang G."/>
            <person name="Feller G."/>
            <person name="Ho C."/>
            <person name="Mangenot S."/>
            <person name="Marino G."/>
            <person name="Nilsson J."/>
            <person name="Parrilli E."/>
            <person name="Rocha E.P.C."/>
            <person name="Rouy Z."/>
            <person name="Sekowska A."/>
            <person name="Tutino M.L."/>
            <person name="Vallenet D."/>
            <person name="von Heijne G."/>
            <person name="Danchin A."/>
        </authorList>
    </citation>
    <scope>NUCLEOTIDE SEQUENCE [LARGE SCALE GENOMIC DNA]</scope>
    <source>
        <strain>TAC 125</strain>
    </source>
</reference>
<accession>Q3ICF9</accession>